<feature type="chain" id="PRO_0000368947" description="ATP synthase subunit b, chloroplastic">
    <location>
        <begin position="1"/>
        <end position="187"/>
    </location>
</feature>
<feature type="transmembrane region" description="Helical" evidence="1">
    <location>
        <begin position="34"/>
        <end position="56"/>
    </location>
</feature>
<reference key="1">
    <citation type="journal article" date="2007" name="BMC Genomics">
        <title>The chloroplast genome sequence of the green alga Leptosira terrestris: multiple losses of the inverted repeat and extensive genome rearrangements within the Trebouxiophyceae.</title>
        <authorList>
            <person name="de Cambiaire J.-C."/>
            <person name="Otis C."/>
            <person name="Turmel M."/>
            <person name="Lemieux C."/>
        </authorList>
    </citation>
    <scope>NUCLEOTIDE SEQUENCE [LARGE SCALE GENOMIC DNA]</scope>
    <source>
        <strain>CCAP 463/2 / UTEX 333</strain>
    </source>
</reference>
<protein>
    <recommendedName>
        <fullName evidence="1">ATP synthase subunit b, chloroplastic</fullName>
    </recommendedName>
    <alternativeName>
        <fullName evidence="1">ATP synthase F(0) sector subunit b</fullName>
    </alternativeName>
    <alternativeName>
        <fullName evidence="1">ATPase subunit I</fullName>
    </alternativeName>
</protein>
<dbReference type="EMBL" id="EF506945">
    <property type="protein sequence ID" value="ABO69286.1"/>
    <property type="molecule type" value="Genomic_DNA"/>
</dbReference>
<dbReference type="RefSeq" id="YP_001382142.1">
    <property type="nucleotide sequence ID" value="NC_009681.1"/>
</dbReference>
<dbReference type="SMR" id="A6YG65"/>
<dbReference type="GeneID" id="5383831"/>
<dbReference type="GO" id="GO:0009535">
    <property type="term" value="C:chloroplast thylakoid membrane"/>
    <property type="evidence" value="ECO:0007669"/>
    <property type="project" value="UniProtKB-SubCell"/>
</dbReference>
<dbReference type="GO" id="GO:0045259">
    <property type="term" value="C:proton-transporting ATP synthase complex"/>
    <property type="evidence" value="ECO:0007669"/>
    <property type="project" value="UniProtKB-KW"/>
</dbReference>
<dbReference type="GO" id="GO:0046933">
    <property type="term" value="F:proton-transporting ATP synthase activity, rotational mechanism"/>
    <property type="evidence" value="ECO:0007669"/>
    <property type="project" value="UniProtKB-UniRule"/>
</dbReference>
<dbReference type="CDD" id="cd06503">
    <property type="entry name" value="ATP-synt_Fo_b"/>
    <property type="match status" value="1"/>
</dbReference>
<dbReference type="HAMAP" id="MF_01398">
    <property type="entry name" value="ATP_synth_b_bprime"/>
    <property type="match status" value="1"/>
</dbReference>
<dbReference type="InterPro" id="IPR002146">
    <property type="entry name" value="ATP_synth_b/b'su_bac/chlpt"/>
</dbReference>
<dbReference type="PANTHER" id="PTHR34264">
    <property type="entry name" value="ATP SYNTHASE SUBUNIT B, CHLOROPLASTIC"/>
    <property type="match status" value="1"/>
</dbReference>
<dbReference type="PANTHER" id="PTHR34264:SF3">
    <property type="entry name" value="ATP SYNTHASE SUBUNIT B, CHLOROPLASTIC"/>
    <property type="match status" value="1"/>
</dbReference>
<dbReference type="Pfam" id="PF00430">
    <property type="entry name" value="ATP-synt_B"/>
    <property type="match status" value="1"/>
</dbReference>
<proteinExistence type="inferred from homology"/>
<organism>
    <name type="scientific">Pleurastrum terricola</name>
    <name type="common">Filamentous green alga</name>
    <name type="synonym">Leptosira terrestris</name>
    <dbReference type="NCBI Taxonomy" id="34116"/>
    <lineage>
        <taxon>Eukaryota</taxon>
        <taxon>Viridiplantae</taxon>
        <taxon>Chlorophyta</taxon>
        <taxon>core chlorophytes</taxon>
        <taxon>Chlorophyceae</taxon>
        <taxon>CS clade</taxon>
        <taxon>Chlamydomonadales</taxon>
        <taxon>Pleurastraceae</taxon>
        <taxon>Pleurastrum</taxon>
    </lineage>
</organism>
<geneLocation type="chloroplast"/>
<evidence type="ECO:0000255" key="1">
    <source>
        <dbReference type="HAMAP-Rule" id="MF_01398"/>
    </source>
</evidence>
<keyword id="KW-0066">ATP synthesis</keyword>
<keyword id="KW-0138">CF(0)</keyword>
<keyword id="KW-0150">Chloroplast</keyword>
<keyword id="KW-0375">Hydrogen ion transport</keyword>
<keyword id="KW-0406">Ion transport</keyword>
<keyword id="KW-0472">Membrane</keyword>
<keyword id="KW-0934">Plastid</keyword>
<keyword id="KW-0793">Thylakoid</keyword>
<keyword id="KW-0812">Transmembrane</keyword>
<keyword id="KW-1133">Transmembrane helix</keyword>
<keyword id="KW-0813">Transport</keyword>
<accession>A6YG65</accession>
<name>ATPF_PLETE</name>
<comment type="function">
    <text evidence="1">F(1)F(0) ATP synthase produces ATP from ADP in the presence of a proton or sodium gradient. F-type ATPases consist of two structural domains, F(1) containing the extramembraneous catalytic core and F(0) containing the membrane proton channel, linked together by a central stalk and a peripheral stalk. During catalysis, ATP synthesis in the catalytic domain of F(1) is coupled via a rotary mechanism of the central stalk subunits to proton translocation.</text>
</comment>
<comment type="function">
    <text evidence="1">Component of the F(0) channel, it forms part of the peripheral stalk, linking F(1) to F(0).</text>
</comment>
<comment type="subunit">
    <text evidence="1">F-type ATPases have 2 components, F(1) - the catalytic core - and F(0) - the membrane proton channel. F(1) has five subunits: alpha(3), beta(3), gamma(1), delta(1), epsilon(1). F(0) has four main subunits: a(1), b(1), b'(1) and c(10-14). The alpha and beta chains form an alternating ring which encloses part of the gamma chain. F(1) is attached to F(0) by a central stalk formed by the gamma and epsilon chains, while a peripheral stalk is formed by the delta, b and b' chains.</text>
</comment>
<comment type="subcellular location">
    <subcellularLocation>
        <location evidence="1">Plastid</location>
        <location evidence="1">Chloroplast thylakoid membrane</location>
        <topology evidence="1">Single-pass membrane protein</topology>
    </subcellularLocation>
</comment>
<comment type="miscellaneous">
    <text>In plastids the F-type ATPase is also known as CF(1)CF(0).</text>
</comment>
<comment type="similarity">
    <text evidence="1">Belongs to the ATPase B chain family.</text>
</comment>
<sequence length="187" mass="21166">MEVFMVSFTLLLGESTFSLGEGFGINTNVFETNIINLSVVLGLVFTLGRNFLISLLDARKETILRNFREADQRAKDAEARLNLAKTELELAEKSAMEIKKQSVLSAELEKKNKNTKIEADTARFKQTQQETLTVQRQRAISKISKQVVNSAITQVKQKLKSSLDSRVQTVINNYKIHKFIEYKPPGN</sequence>
<gene>
    <name evidence="1" type="primary">atpF</name>
</gene>